<feature type="chain" id="PRO_1000017334" description="Succinylglutamate desuccinylase">
    <location>
        <begin position="1"/>
        <end position="330"/>
    </location>
</feature>
<feature type="active site" evidence="1">
    <location>
        <position position="210"/>
    </location>
</feature>
<feature type="binding site" evidence="1">
    <location>
        <position position="53"/>
    </location>
    <ligand>
        <name>Zn(2+)</name>
        <dbReference type="ChEBI" id="CHEBI:29105"/>
    </ligand>
</feature>
<feature type="binding site" evidence="1">
    <location>
        <position position="56"/>
    </location>
    <ligand>
        <name>Zn(2+)</name>
        <dbReference type="ChEBI" id="CHEBI:29105"/>
    </ligand>
</feature>
<feature type="binding site" evidence="1">
    <location>
        <position position="147"/>
    </location>
    <ligand>
        <name>Zn(2+)</name>
        <dbReference type="ChEBI" id="CHEBI:29105"/>
    </ligand>
</feature>
<proteinExistence type="inferred from homology"/>
<organism>
    <name type="scientific">Yersinia enterocolitica serotype O:8 / biotype 1B (strain NCTC 13174 / 8081)</name>
    <dbReference type="NCBI Taxonomy" id="393305"/>
    <lineage>
        <taxon>Bacteria</taxon>
        <taxon>Pseudomonadati</taxon>
        <taxon>Pseudomonadota</taxon>
        <taxon>Gammaproteobacteria</taxon>
        <taxon>Enterobacterales</taxon>
        <taxon>Yersiniaceae</taxon>
        <taxon>Yersinia</taxon>
    </lineage>
</organism>
<evidence type="ECO:0000255" key="1">
    <source>
        <dbReference type="HAMAP-Rule" id="MF_00767"/>
    </source>
</evidence>
<dbReference type="EC" id="3.5.1.96" evidence="1"/>
<dbReference type="EMBL" id="AM286415">
    <property type="protein sequence ID" value="CAL12508.1"/>
    <property type="molecule type" value="Genomic_DNA"/>
</dbReference>
<dbReference type="RefSeq" id="WP_011816557.1">
    <property type="nucleotide sequence ID" value="NC_008800.1"/>
</dbReference>
<dbReference type="RefSeq" id="YP_001006672.1">
    <property type="nucleotide sequence ID" value="NC_008800.1"/>
</dbReference>
<dbReference type="SMR" id="A1JS32"/>
<dbReference type="KEGG" id="yen:YE2465"/>
<dbReference type="PATRIC" id="fig|393305.7.peg.2616"/>
<dbReference type="eggNOG" id="COG2988">
    <property type="taxonomic scope" value="Bacteria"/>
</dbReference>
<dbReference type="HOGENOM" id="CLU_071608_0_0_6"/>
<dbReference type="OrthoDB" id="5290473at2"/>
<dbReference type="UniPathway" id="UPA00185">
    <property type="reaction ID" value="UER00283"/>
</dbReference>
<dbReference type="Proteomes" id="UP000000642">
    <property type="component" value="Chromosome"/>
</dbReference>
<dbReference type="GO" id="GO:0016788">
    <property type="term" value="F:hydrolase activity, acting on ester bonds"/>
    <property type="evidence" value="ECO:0007669"/>
    <property type="project" value="UniProtKB-UniRule"/>
</dbReference>
<dbReference type="GO" id="GO:0009017">
    <property type="term" value="F:succinylglutamate desuccinylase activity"/>
    <property type="evidence" value="ECO:0007669"/>
    <property type="project" value="UniProtKB-EC"/>
</dbReference>
<dbReference type="GO" id="GO:0008270">
    <property type="term" value="F:zinc ion binding"/>
    <property type="evidence" value="ECO:0007669"/>
    <property type="project" value="UniProtKB-UniRule"/>
</dbReference>
<dbReference type="GO" id="GO:0019544">
    <property type="term" value="P:arginine catabolic process to glutamate"/>
    <property type="evidence" value="ECO:0007669"/>
    <property type="project" value="UniProtKB-UniRule"/>
</dbReference>
<dbReference type="GO" id="GO:0019545">
    <property type="term" value="P:arginine catabolic process to succinate"/>
    <property type="evidence" value="ECO:0007669"/>
    <property type="project" value="UniProtKB-UniRule"/>
</dbReference>
<dbReference type="CDD" id="cd03855">
    <property type="entry name" value="M14_ASTE"/>
    <property type="match status" value="1"/>
</dbReference>
<dbReference type="FunFam" id="3.40.630.10:FF:000017">
    <property type="entry name" value="Succinylglutamate desuccinylase"/>
    <property type="match status" value="1"/>
</dbReference>
<dbReference type="Gene3D" id="3.40.630.10">
    <property type="entry name" value="Zn peptidases"/>
    <property type="match status" value="1"/>
</dbReference>
<dbReference type="HAMAP" id="MF_00767">
    <property type="entry name" value="Arg_catab_AstE"/>
    <property type="match status" value="1"/>
</dbReference>
<dbReference type="InterPro" id="IPR050178">
    <property type="entry name" value="AspA/AstE_fam"/>
</dbReference>
<dbReference type="InterPro" id="IPR055438">
    <property type="entry name" value="AstE_AspA_cat"/>
</dbReference>
<dbReference type="InterPro" id="IPR007036">
    <property type="entry name" value="Aste_AspA_hybrid_dom"/>
</dbReference>
<dbReference type="InterPro" id="IPR016681">
    <property type="entry name" value="SuccinylGlu_desuccinylase"/>
</dbReference>
<dbReference type="NCBIfam" id="TIGR03242">
    <property type="entry name" value="arg_catab_astE"/>
    <property type="match status" value="1"/>
</dbReference>
<dbReference type="NCBIfam" id="NF003706">
    <property type="entry name" value="PRK05324.1"/>
    <property type="match status" value="1"/>
</dbReference>
<dbReference type="PANTHER" id="PTHR15162">
    <property type="entry name" value="ASPARTOACYLASE"/>
    <property type="match status" value="1"/>
</dbReference>
<dbReference type="PANTHER" id="PTHR15162:SF7">
    <property type="entry name" value="SUCCINYLGLUTAMATE DESUCCINYLASE"/>
    <property type="match status" value="1"/>
</dbReference>
<dbReference type="Pfam" id="PF24827">
    <property type="entry name" value="AstE_AspA_cat"/>
    <property type="match status" value="1"/>
</dbReference>
<dbReference type="Pfam" id="PF04952">
    <property type="entry name" value="AstE_AspA_hybrid"/>
    <property type="match status" value="1"/>
</dbReference>
<dbReference type="PIRSF" id="PIRSF017020">
    <property type="entry name" value="AstE"/>
    <property type="match status" value="1"/>
</dbReference>
<dbReference type="SUPFAM" id="SSF53187">
    <property type="entry name" value="Zn-dependent exopeptidases"/>
    <property type="match status" value="1"/>
</dbReference>
<comment type="function">
    <text evidence="1">Transforms N(2)-succinylglutamate into succinate and glutamate.</text>
</comment>
<comment type="catalytic activity">
    <reaction evidence="1">
        <text>N-succinyl-L-glutamate + H2O = L-glutamate + succinate</text>
        <dbReference type="Rhea" id="RHEA:15169"/>
        <dbReference type="ChEBI" id="CHEBI:15377"/>
        <dbReference type="ChEBI" id="CHEBI:29985"/>
        <dbReference type="ChEBI" id="CHEBI:30031"/>
        <dbReference type="ChEBI" id="CHEBI:58763"/>
        <dbReference type="EC" id="3.5.1.96"/>
    </reaction>
</comment>
<comment type="cofactor">
    <cofactor evidence="1">
        <name>Zn(2+)</name>
        <dbReference type="ChEBI" id="CHEBI:29105"/>
    </cofactor>
    <text evidence="1">Binds 1 zinc ion per subunit.</text>
</comment>
<comment type="pathway">
    <text evidence="1">Amino-acid degradation; L-arginine degradation via AST pathway; L-glutamate and succinate from L-arginine: step 5/5.</text>
</comment>
<comment type="similarity">
    <text evidence="1">Belongs to the AspA/AstE family. Succinylglutamate desuccinylase subfamily.</text>
</comment>
<protein>
    <recommendedName>
        <fullName evidence="1">Succinylglutamate desuccinylase</fullName>
        <ecNumber evidence="1">3.5.1.96</ecNumber>
    </recommendedName>
</protein>
<sequence length="330" mass="36775">MPDFLSITLSGVPPSLTSGETSNLKWQWVDEGVLMLTPHGACSQSVVLSAGIHGNETAPIEILNQLVSDLLASQLPLAVRLLVILGNPPAIRAGERYLTADINRMFGGRYKNHSLTDEARRAEILEQKVGEFFASDPLSLRLHYDLHTAIRGSHHNRFGLLPYRTTPYCAAMLRWLKDSELDALVMHTSAGGTFAHFSSEFCQAASCTLELGKALPFGQNQLEQFRPITAGLRALVSGGQLPTRSTEAMIFYRVVKSLLKQHADFKLWVADDTVNFTRYPQGTLMIEQLNEHYCVEHEYEWILFPNPRVALGLRAGIMLVQMDENDLLQA</sequence>
<gene>
    <name evidence="1" type="primary">astE</name>
    <name type="ordered locus">YE2465</name>
</gene>
<keyword id="KW-0056">Arginine metabolism</keyword>
<keyword id="KW-0378">Hydrolase</keyword>
<keyword id="KW-0479">Metal-binding</keyword>
<keyword id="KW-0862">Zinc</keyword>
<name>ASTE_YERE8</name>
<accession>A1JS32</accession>
<reference key="1">
    <citation type="journal article" date="2006" name="PLoS Genet.">
        <title>The complete genome sequence and comparative genome analysis of the high pathogenicity Yersinia enterocolitica strain 8081.</title>
        <authorList>
            <person name="Thomson N.R."/>
            <person name="Howard S."/>
            <person name="Wren B.W."/>
            <person name="Holden M.T.G."/>
            <person name="Crossman L."/>
            <person name="Challis G.L."/>
            <person name="Churcher C."/>
            <person name="Mungall K."/>
            <person name="Brooks K."/>
            <person name="Chillingworth T."/>
            <person name="Feltwell T."/>
            <person name="Abdellah Z."/>
            <person name="Hauser H."/>
            <person name="Jagels K."/>
            <person name="Maddison M."/>
            <person name="Moule S."/>
            <person name="Sanders M."/>
            <person name="Whitehead S."/>
            <person name="Quail M.A."/>
            <person name="Dougan G."/>
            <person name="Parkhill J."/>
            <person name="Prentice M.B."/>
        </authorList>
    </citation>
    <scope>NUCLEOTIDE SEQUENCE [LARGE SCALE GENOMIC DNA]</scope>
    <source>
        <strain>NCTC 13174 / 8081</strain>
    </source>
</reference>